<reference key="1">
    <citation type="journal article" date="2007" name="Science">
        <title>The Fusarium graminearum genome reveals a link between localized polymorphism and pathogen specialization.</title>
        <authorList>
            <person name="Cuomo C.A."/>
            <person name="Gueldener U."/>
            <person name="Xu J.-R."/>
            <person name="Trail F."/>
            <person name="Turgeon B.G."/>
            <person name="Di Pietro A."/>
            <person name="Walton J.D."/>
            <person name="Ma L.-J."/>
            <person name="Baker S.E."/>
            <person name="Rep M."/>
            <person name="Adam G."/>
            <person name="Antoniw J."/>
            <person name="Baldwin T."/>
            <person name="Calvo S.E."/>
            <person name="Chang Y.-L."/>
            <person name="DeCaprio D."/>
            <person name="Gale L.R."/>
            <person name="Gnerre S."/>
            <person name="Goswami R.S."/>
            <person name="Hammond-Kosack K."/>
            <person name="Harris L.J."/>
            <person name="Hilburn K."/>
            <person name="Kennell J.C."/>
            <person name="Kroken S."/>
            <person name="Magnuson J.K."/>
            <person name="Mannhaupt G."/>
            <person name="Mauceli E.W."/>
            <person name="Mewes H.-W."/>
            <person name="Mitterbauer R."/>
            <person name="Muehlbauer G."/>
            <person name="Muensterkoetter M."/>
            <person name="Nelson D."/>
            <person name="O'Donnell K."/>
            <person name="Ouellet T."/>
            <person name="Qi W."/>
            <person name="Quesneville H."/>
            <person name="Roncero M.I.G."/>
            <person name="Seong K.-Y."/>
            <person name="Tetko I.V."/>
            <person name="Urban M."/>
            <person name="Waalwijk C."/>
            <person name="Ward T.J."/>
            <person name="Yao J."/>
            <person name="Birren B.W."/>
            <person name="Kistler H.C."/>
        </authorList>
    </citation>
    <scope>NUCLEOTIDE SEQUENCE [LARGE SCALE GENOMIC DNA]</scope>
    <source>
        <strain>ATCC MYA-4620 / CBS 123657 / FGSC 9075 / NRRL 31084 / PH-1</strain>
    </source>
</reference>
<reference key="2">
    <citation type="journal article" date="2010" name="Nature">
        <title>Comparative genomics reveals mobile pathogenicity chromosomes in Fusarium.</title>
        <authorList>
            <person name="Ma L.-J."/>
            <person name="van der Does H.C."/>
            <person name="Borkovich K.A."/>
            <person name="Coleman J.J."/>
            <person name="Daboussi M.-J."/>
            <person name="Di Pietro A."/>
            <person name="Dufresne M."/>
            <person name="Freitag M."/>
            <person name="Grabherr M."/>
            <person name="Henrissat B."/>
            <person name="Houterman P.M."/>
            <person name="Kang S."/>
            <person name="Shim W.-B."/>
            <person name="Woloshuk C."/>
            <person name="Xie X."/>
            <person name="Xu J.-R."/>
            <person name="Antoniw J."/>
            <person name="Baker S.E."/>
            <person name="Bluhm B.H."/>
            <person name="Breakspear A."/>
            <person name="Brown D.W."/>
            <person name="Butchko R.A.E."/>
            <person name="Chapman S."/>
            <person name="Coulson R."/>
            <person name="Coutinho P.M."/>
            <person name="Danchin E.G.J."/>
            <person name="Diener A."/>
            <person name="Gale L.R."/>
            <person name="Gardiner D.M."/>
            <person name="Goff S."/>
            <person name="Hammond-Kosack K.E."/>
            <person name="Hilburn K."/>
            <person name="Hua-Van A."/>
            <person name="Jonkers W."/>
            <person name="Kazan K."/>
            <person name="Kodira C.D."/>
            <person name="Koehrsen M."/>
            <person name="Kumar L."/>
            <person name="Lee Y.-H."/>
            <person name="Li L."/>
            <person name="Manners J.M."/>
            <person name="Miranda-Saavedra D."/>
            <person name="Mukherjee M."/>
            <person name="Park G."/>
            <person name="Park J."/>
            <person name="Park S.-Y."/>
            <person name="Proctor R.H."/>
            <person name="Regev A."/>
            <person name="Ruiz-Roldan M.C."/>
            <person name="Sain D."/>
            <person name="Sakthikumar S."/>
            <person name="Sykes S."/>
            <person name="Schwartz D.C."/>
            <person name="Turgeon B.G."/>
            <person name="Wapinski I."/>
            <person name="Yoder O."/>
            <person name="Young S."/>
            <person name="Zeng Q."/>
            <person name="Zhou S."/>
            <person name="Galagan J."/>
            <person name="Cuomo C.A."/>
            <person name="Kistler H.C."/>
            <person name="Rep M."/>
        </authorList>
    </citation>
    <scope>GENOME REANNOTATION</scope>
    <source>
        <strain>ATCC MYA-4620 / CBS 123657 / FGSC 9075 / NRRL 31084 / PH-1</strain>
    </source>
</reference>
<reference key="3">
    <citation type="journal article" date="2015" name="BMC Genomics">
        <title>The completed genome sequence of the pathogenic ascomycete fungus Fusarium graminearum.</title>
        <authorList>
            <person name="King R."/>
            <person name="Urban M."/>
            <person name="Hammond-Kosack M.C.U."/>
            <person name="Hassani-Pak K."/>
            <person name="Hammond-Kosack K.E."/>
        </authorList>
    </citation>
    <scope>NUCLEOTIDE SEQUENCE [LARGE SCALE GENOMIC DNA]</scope>
    <source>
        <strain>ATCC MYA-4620 / CBS 123657 / FGSC 9075 / NRRL 31084 / PH-1</strain>
    </source>
</reference>
<feature type="chain" id="PRO_0000087593" description="Polynucleotide 5'-hydroxyl-kinase GRC3">
    <location>
        <begin position="1"/>
        <end position="720"/>
    </location>
</feature>
<feature type="region of interest" description="Disordered" evidence="3">
    <location>
        <begin position="1"/>
        <end position="91"/>
    </location>
</feature>
<feature type="region of interest" description="Disordered" evidence="3">
    <location>
        <begin position="663"/>
        <end position="686"/>
    </location>
</feature>
<feature type="region of interest" description="Disordered" evidence="3">
    <location>
        <begin position="698"/>
        <end position="720"/>
    </location>
</feature>
<feature type="compositionally biased region" description="Acidic residues" evidence="3">
    <location>
        <begin position="663"/>
        <end position="672"/>
    </location>
</feature>
<feature type="binding site" evidence="2">
    <location>
        <begin position="285"/>
        <end position="292"/>
    </location>
    <ligand>
        <name>ATP</name>
        <dbReference type="ChEBI" id="CHEBI:30616"/>
    </ligand>
</feature>
<keyword id="KW-0067">ATP-binding</keyword>
<keyword id="KW-0418">Kinase</keyword>
<keyword id="KW-0547">Nucleotide-binding</keyword>
<keyword id="KW-0539">Nucleus</keyword>
<keyword id="KW-1185">Reference proteome</keyword>
<keyword id="KW-0698">rRNA processing</keyword>
<keyword id="KW-0808">Transferase</keyword>
<sequence length="720" mass="79096">MSSNKKRRIDEKPMSALSALQARRREAAASPVQTTQTGSESDEKSVTTSVNPYQLLRKDSSQSTAPKTPKKNVVKDQYLPRGAESPASRSRGVVIASGNTDTLNPELAGASQKVVREYSSFRLSKQNHRVKTGGVVELNLSNSERFLVLGSFGIRVIQGEVSLAGATLYPSETIEWVHAPHCHAVPMLRTIDETILELHPDRNARGIRQLGRLSPLFRKIWNESPETNSSKTSKESTFEIIYTSEDAPKKCIIQKLVSPPEWNKKLSSLVATSRKKPSLSTLICGPKSAGKSTFSRLFLNGLLTDRSQKQGARSVVILDLDPGQPEYAPPGTLSLVFVTKPNLGTPFTHPSLKNSAFTVVRSHSMASATPAPNPDLYLACATDLFDTYSKHYSGAPLIVNTPGWIQGTGLDLLSSLIEKIKPQEVLYMSEAGPDEAVNALRAATKLMFTELPSQPSEFTSRTAAHLRAMQTMSYFHLQNTALKTSNLLDTSTRLKWDASPLSSRAPLLVQYSSSKRGVLGLLSYDYQCSPELLADTVNGLVLAAVEIEDRKAFSNFPQEVAPPPLVSTSPENIPFIPNYDDVALDPRYSRTIGLVLLRGIDTKSETLQLVTPIPLEEFRSIKSQGRSIVLLHGKFDTPNWAYTEELYERAGTEEGNDMVLEVTEEDTEDDQSGVEPEGADGVSDLTEVPWVEVLKGSQRRPVGSQVWRPLRHLGRNNTGD</sequence>
<evidence type="ECO:0000250" key="1"/>
<evidence type="ECO:0000255" key="2"/>
<evidence type="ECO:0000256" key="3">
    <source>
        <dbReference type="SAM" id="MobiDB-lite"/>
    </source>
</evidence>
<evidence type="ECO:0000305" key="4"/>
<organism>
    <name type="scientific">Gibberella zeae (strain ATCC MYA-4620 / CBS 123657 / FGSC 9075 / NRRL 31084 / PH-1)</name>
    <name type="common">Wheat head blight fungus</name>
    <name type="synonym">Fusarium graminearum</name>
    <dbReference type="NCBI Taxonomy" id="229533"/>
    <lineage>
        <taxon>Eukaryota</taxon>
        <taxon>Fungi</taxon>
        <taxon>Dikarya</taxon>
        <taxon>Ascomycota</taxon>
        <taxon>Pezizomycotina</taxon>
        <taxon>Sordariomycetes</taxon>
        <taxon>Hypocreomycetidae</taxon>
        <taxon>Hypocreales</taxon>
        <taxon>Nectriaceae</taxon>
        <taxon>Fusarium</taxon>
    </lineage>
</organism>
<comment type="function">
    <text evidence="1">Polynucleotide 5'-kinase involved in rRNA processing.</text>
</comment>
<comment type="subcellular location">
    <subcellularLocation>
        <location evidence="1">Nucleus</location>
        <location evidence="1">Nucleolus</location>
    </subcellularLocation>
</comment>
<comment type="similarity">
    <text evidence="4">Belongs to the Clp1 family. NOL9/GRC3 subfamily.</text>
</comment>
<accession>Q4IR18</accession>
<accession>A0A0E0RLX5</accession>
<accession>I1RA23</accession>
<accession>V6QUY7</accession>
<proteinExistence type="inferred from homology"/>
<gene>
    <name type="primary">GRC3</name>
    <name type="ORF">FGRRES_00340</name>
    <name type="ORF">FGSG_00340</name>
</gene>
<name>GRC3_GIBZE</name>
<dbReference type="EC" id="2.7.1.-"/>
<dbReference type="EMBL" id="DS231663">
    <property type="protein sequence ID" value="ESU05507.1"/>
    <property type="molecule type" value="Genomic_DNA"/>
</dbReference>
<dbReference type="EMBL" id="HG970332">
    <property type="protein sequence ID" value="CEF72250.1"/>
    <property type="molecule type" value="Genomic_DNA"/>
</dbReference>
<dbReference type="RefSeq" id="XP_011315992.1">
    <property type="nucleotide sequence ID" value="XM_011317690.1"/>
</dbReference>
<dbReference type="SMR" id="Q4IR18"/>
<dbReference type="FunCoup" id="Q4IR18">
    <property type="interactions" value="152"/>
</dbReference>
<dbReference type="STRING" id="229533.Q4IR18"/>
<dbReference type="GeneID" id="23547832"/>
<dbReference type="KEGG" id="fgr:FGSG_00340"/>
<dbReference type="VEuPathDB" id="FungiDB:FGRAMPH1_01G00895"/>
<dbReference type="eggNOG" id="KOG2750">
    <property type="taxonomic scope" value="Eukaryota"/>
</dbReference>
<dbReference type="HOGENOM" id="CLU_010345_1_0_1"/>
<dbReference type="InParanoid" id="Q4IR18"/>
<dbReference type="OrthoDB" id="81480at110618"/>
<dbReference type="Proteomes" id="UP000070720">
    <property type="component" value="Chromosome 1"/>
</dbReference>
<dbReference type="GO" id="GO:0005730">
    <property type="term" value="C:nucleolus"/>
    <property type="evidence" value="ECO:0007669"/>
    <property type="project" value="UniProtKB-SubCell"/>
</dbReference>
<dbReference type="GO" id="GO:0005524">
    <property type="term" value="F:ATP binding"/>
    <property type="evidence" value="ECO:0007669"/>
    <property type="project" value="UniProtKB-KW"/>
</dbReference>
<dbReference type="GO" id="GO:0051731">
    <property type="term" value="F:polynucleotide 5'-hydroxyl-kinase activity"/>
    <property type="evidence" value="ECO:0000250"/>
    <property type="project" value="UniProtKB"/>
</dbReference>
<dbReference type="GO" id="GO:0000448">
    <property type="term" value="P:cleavage in ITS2 between 5.8S rRNA and LSU-rRNA of tricistronic rRNA transcript (SSU-rRNA, 5.8S rRNA, LSU-rRNA)"/>
    <property type="evidence" value="ECO:0007669"/>
    <property type="project" value="TreeGrafter"/>
</dbReference>
<dbReference type="GO" id="GO:0006364">
    <property type="term" value="P:rRNA processing"/>
    <property type="evidence" value="ECO:0000250"/>
    <property type="project" value="UniProtKB"/>
</dbReference>
<dbReference type="FunFam" id="3.40.50.300:FF:001156">
    <property type="entry name" value="Polynucleotide 5-hydroxyl-kinase grc3"/>
    <property type="match status" value="1"/>
</dbReference>
<dbReference type="Gene3D" id="3.40.50.300">
    <property type="entry name" value="P-loop containing nucleotide triphosphate hydrolases"/>
    <property type="match status" value="1"/>
</dbReference>
<dbReference type="InterPro" id="IPR045116">
    <property type="entry name" value="Clp1/Grc3"/>
</dbReference>
<dbReference type="InterPro" id="IPR032319">
    <property type="entry name" value="CLP1_P"/>
</dbReference>
<dbReference type="InterPro" id="IPR027417">
    <property type="entry name" value="P-loop_NTPase"/>
</dbReference>
<dbReference type="PANTHER" id="PTHR12755">
    <property type="entry name" value="CLEAVAGE/POLYADENYLATION FACTOR IA SUBUNIT CLP1P"/>
    <property type="match status" value="1"/>
</dbReference>
<dbReference type="PANTHER" id="PTHR12755:SF3">
    <property type="entry name" value="POLYNUCLEOTIDE 5'-HYDROXYL-KINASE NOL9"/>
    <property type="match status" value="1"/>
</dbReference>
<dbReference type="Pfam" id="PF16575">
    <property type="entry name" value="CLP1_P"/>
    <property type="match status" value="1"/>
</dbReference>
<protein>
    <recommendedName>
        <fullName>Polynucleotide 5'-hydroxyl-kinase GRC3</fullName>
        <ecNumber>2.7.1.-</ecNumber>
    </recommendedName>
</protein>